<dbReference type="EMBL" id="CP000814">
    <property type="protein sequence ID" value="ABV53191.1"/>
    <property type="molecule type" value="Genomic_DNA"/>
</dbReference>
<dbReference type="RefSeq" id="WP_002779428.1">
    <property type="nucleotide sequence ID" value="NC_009839.1"/>
</dbReference>
<dbReference type="SMR" id="A8FP04"/>
<dbReference type="GeneID" id="98395681"/>
<dbReference type="KEGG" id="cju:C8J_1594"/>
<dbReference type="HOGENOM" id="CLU_065898_2_2_7"/>
<dbReference type="GO" id="GO:0015935">
    <property type="term" value="C:small ribosomal subunit"/>
    <property type="evidence" value="ECO:0007669"/>
    <property type="project" value="InterPro"/>
</dbReference>
<dbReference type="GO" id="GO:0019843">
    <property type="term" value="F:rRNA binding"/>
    <property type="evidence" value="ECO:0007669"/>
    <property type="project" value="UniProtKB-UniRule"/>
</dbReference>
<dbReference type="GO" id="GO:0003735">
    <property type="term" value="F:structural constituent of ribosome"/>
    <property type="evidence" value="ECO:0007669"/>
    <property type="project" value="InterPro"/>
</dbReference>
<dbReference type="GO" id="GO:0006412">
    <property type="term" value="P:translation"/>
    <property type="evidence" value="ECO:0007669"/>
    <property type="project" value="UniProtKB-UniRule"/>
</dbReference>
<dbReference type="FunFam" id="3.30.160.20:FF:000001">
    <property type="entry name" value="30S ribosomal protein S5"/>
    <property type="match status" value="1"/>
</dbReference>
<dbReference type="FunFam" id="3.30.230.10:FF:000024">
    <property type="entry name" value="30S ribosomal protein S5"/>
    <property type="match status" value="1"/>
</dbReference>
<dbReference type="Gene3D" id="3.30.160.20">
    <property type="match status" value="1"/>
</dbReference>
<dbReference type="Gene3D" id="3.30.230.10">
    <property type="match status" value="1"/>
</dbReference>
<dbReference type="HAMAP" id="MF_01307_B">
    <property type="entry name" value="Ribosomal_uS5_B"/>
    <property type="match status" value="1"/>
</dbReference>
<dbReference type="InterPro" id="IPR020568">
    <property type="entry name" value="Ribosomal_Su5_D2-typ_SF"/>
</dbReference>
<dbReference type="InterPro" id="IPR000851">
    <property type="entry name" value="Ribosomal_uS5"/>
</dbReference>
<dbReference type="InterPro" id="IPR005712">
    <property type="entry name" value="Ribosomal_uS5_bac-type"/>
</dbReference>
<dbReference type="InterPro" id="IPR005324">
    <property type="entry name" value="Ribosomal_uS5_C"/>
</dbReference>
<dbReference type="InterPro" id="IPR013810">
    <property type="entry name" value="Ribosomal_uS5_N"/>
</dbReference>
<dbReference type="InterPro" id="IPR018192">
    <property type="entry name" value="Ribosomal_uS5_N_CS"/>
</dbReference>
<dbReference type="InterPro" id="IPR014721">
    <property type="entry name" value="Ribsml_uS5_D2-typ_fold_subgr"/>
</dbReference>
<dbReference type="NCBIfam" id="TIGR01021">
    <property type="entry name" value="rpsE_bact"/>
    <property type="match status" value="1"/>
</dbReference>
<dbReference type="PANTHER" id="PTHR48277">
    <property type="entry name" value="MITOCHONDRIAL RIBOSOMAL PROTEIN S5"/>
    <property type="match status" value="1"/>
</dbReference>
<dbReference type="PANTHER" id="PTHR48277:SF1">
    <property type="entry name" value="MITOCHONDRIAL RIBOSOMAL PROTEIN S5"/>
    <property type="match status" value="1"/>
</dbReference>
<dbReference type="Pfam" id="PF00333">
    <property type="entry name" value="Ribosomal_S5"/>
    <property type="match status" value="1"/>
</dbReference>
<dbReference type="Pfam" id="PF03719">
    <property type="entry name" value="Ribosomal_S5_C"/>
    <property type="match status" value="1"/>
</dbReference>
<dbReference type="SUPFAM" id="SSF54768">
    <property type="entry name" value="dsRNA-binding domain-like"/>
    <property type="match status" value="1"/>
</dbReference>
<dbReference type="SUPFAM" id="SSF54211">
    <property type="entry name" value="Ribosomal protein S5 domain 2-like"/>
    <property type="match status" value="1"/>
</dbReference>
<dbReference type="PROSITE" id="PS00585">
    <property type="entry name" value="RIBOSOMAL_S5"/>
    <property type="match status" value="1"/>
</dbReference>
<dbReference type="PROSITE" id="PS50881">
    <property type="entry name" value="S5_DSRBD"/>
    <property type="match status" value="1"/>
</dbReference>
<evidence type="ECO:0000255" key="1">
    <source>
        <dbReference type="HAMAP-Rule" id="MF_01307"/>
    </source>
</evidence>
<evidence type="ECO:0000305" key="2"/>
<organism>
    <name type="scientific">Campylobacter jejuni subsp. jejuni serotype O:6 (strain 81116 / NCTC 11828)</name>
    <dbReference type="NCBI Taxonomy" id="407148"/>
    <lineage>
        <taxon>Bacteria</taxon>
        <taxon>Pseudomonadati</taxon>
        <taxon>Campylobacterota</taxon>
        <taxon>Epsilonproteobacteria</taxon>
        <taxon>Campylobacterales</taxon>
        <taxon>Campylobacteraceae</taxon>
        <taxon>Campylobacter</taxon>
    </lineage>
</organism>
<accession>A8FP04</accession>
<protein>
    <recommendedName>
        <fullName evidence="1">Small ribosomal subunit protein uS5</fullName>
    </recommendedName>
    <alternativeName>
        <fullName evidence="2">30S ribosomal protein S5</fullName>
    </alternativeName>
</protein>
<name>RS5_CAMJ8</name>
<keyword id="KW-0687">Ribonucleoprotein</keyword>
<keyword id="KW-0689">Ribosomal protein</keyword>
<keyword id="KW-0694">RNA-binding</keyword>
<keyword id="KW-0699">rRNA-binding</keyword>
<comment type="function">
    <text evidence="1">With S4 and S12 plays an important role in translational accuracy.</text>
</comment>
<comment type="function">
    <text evidence="1">Located at the back of the 30S subunit body where it stabilizes the conformation of the head with respect to the body.</text>
</comment>
<comment type="subunit">
    <text evidence="1">Part of the 30S ribosomal subunit. Contacts proteins S4 and S8.</text>
</comment>
<comment type="domain">
    <text>The N-terminal domain interacts with the head of the 30S subunit; the C-terminal domain interacts with the body and contacts protein S4. The interaction surface between S4 and S5 is involved in control of translational fidelity.</text>
</comment>
<comment type="similarity">
    <text evidence="1">Belongs to the universal ribosomal protein uS5 family.</text>
</comment>
<reference key="1">
    <citation type="journal article" date="2007" name="J. Bacteriol.">
        <title>The complete genome sequence of Campylobacter jejuni strain 81116 (NCTC11828).</title>
        <authorList>
            <person name="Pearson B.M."/>
            <person name="Gaskin D.J.H."/>
            <person name="Segers R.P.A.M."/>
            <person name="Wells J.M."/>
            <person name="Nuijten P.J.M."/>
            <person name="van Vliet A.H.M."/>
        </authorList>
    </citation>
    <scope>NUCLEOTIDE SEQUENCE [LARGE SCALE GENOMIC DNA]</scope>
    <source>
        <strain>81116 / NCTC 11828</strain>
    </source>
</reference>
<sequence length="147" mass="15796">MEKYNREEFEEVIVDIGRVTKVVKGGRRFRFTALVIVGNRKGLVGVGYGKAKEVPDAIRKAVDDAFKNIVEVKTKGSTIAHDVEVKYNASRILLKPASEGTGVIAGGSTRPIVELAGIKDILTKSLGSNNSANVVRATIKALTMLKG</sequence>
<feature type="chain" id="PRO_0000323102" description="Small ribosomal subunit protein uS5">
    <location>
        <begin position="1"/>
        <end position="147"/>
    </location>
</feature>
<feature type="domain" description="S5 DRBM" evidence="1">
    <location>
        <begin position="9"/>
        <end position="72"/>
    </location>
</feature>
<gene>
    <name evidence="1" type="primary">rpsE</name>
    <name type="ordered locus">C8J_1594</name>
</gene>
<proteinExistence type="inferred from homology"/>